<name>MURB_MYCGI</name>
<gene>
    <name evidence="1" type="primary">murB</name>
    <name type="ordered locus">Mflv_0090</name>
</gene>
<proteinExistence type="inferred from homology"/>
<comment type="function">
    <text evidence="1">Cell wall formation.</text>
</comment>
<comment type="catalytic activity">
    <reaction evidence="1">
        <text>UDP-N-acetyl-alpha-D-muramate + NADP(+) = UDP-N-acetyl-3-O-(1-carboxyvinyl)-alpha-D-glucosamine + NADPH + H(+)</text>
        <dbReference type="Rhea" id="RHEA:12248"/>
        <dbReference type="ChEBI" id="CHEBI:15378"/>
        <dbReference type="ChEBI" id="CHEBI:57783"/>
        <dbReference type="ChEBI" id="CHEBI:58349"/>
        <dbReference type="ChEBI" id="CHEBI:68483"/>
        <dbReference type="ChEBI" id="CHEBI:70757"/>
        <dbReference type="EC" id="1.3.1.98"/>
    </reaction>
</comment>
<comment type="cofactor">
    <cofactor evidence="1">
        <name>FAD</name>
        <dbReference type="ChEBI" id="CHEBI:57692"/>
    </cofactor>
</comment>
<comment type="pathway">
    <text evidence="1">Cell wall biogenesis; peptidoglycan biosynthesis.</text>
</comment>
<comment type="subcellular location">
    <subcellularLocation>
        <location evidence="1">Cytoplasm</location>
    </subcellularLocation>
</comment>
<comment type="similarity">
    <text evidence="1">Belongs to the MurB family.</text>
</comment>
<dbReference type="EC" id="1.3.1.98" evidence="1"/>
<dbReference type="EMBL" id="CP000656">
    <property type="protein sequence ID" value="ABP42586.1"/>
    <property type="molecule type" value="Genomic_DNA"/>
</dbReference>
<dbReference type="SMR" id="A4T318"/>
<dbReference type="STRING" id="350054.Mflv_0090"/>
<dbReference type="KEGG" id="mgi:Mflv_0090"/>
<dbReference type="eggNOG" id="COG0812">
    <property type="taxonomic scope" value="Bacteria"/>
</dbReference>
<dbReference type="HOGENOM" id="CLU_035304_0_1_11"/>
<dbReference type="OrthoDB" id="9804753at2"/>
<dbReference type="UniPathway" id="UPA00219"/>
<dbReference type="GO" id="GO:0005829">
    <property type="term" value="C:cytosol"/>
    <property type="evidence" value="ECO:0007669"/>
    <property type="project" value="TreeGrafter"/>
</dbReference>
<dbReference type="GO" id="GO:0071949">
    <property type="term" value="F:FAD binding"/>
    <property type="evidence" value="ECO:0007669"/>
    <property type="project" value="InterPro"/>
</dbReference>
<dbReference type="GO" id="GO:0008762">
    <property type="term" value="F:UDP-N-acetylmuramate dehydrogenase activity"/>
    <property type="evidence" value="ECO:0007669"/>
    <property type="project" value="UniProtKB-UniRule"/>
</dbReference>
<dbReference type="GO" id="GO:0051301">
    <property type="term" value="P:cell division"/>
    <property type="evidence" value="ECO:0007669"/>
    <property type="project" value="UniProtKB-KW"/>
</dbReference>
<dbReference type="GO" id="GO:0071555">
    <property type="term" value="P:cell wall organization"/>
    <property type="evidence" value="ECO:0007669"/>
    <property type="project" value="UniProtKB-KW"/>
</dbReference>
<dbReference type="GO" id="GO:0009252">
    <property type="term" value="P:peptidoglycan biosynthetic process"/>
    <property type="evidence" value="ECO:0007669"/>
    <property type="project" value="UniProtKB-UniRule"/>
</dbReference>
<dbReference type="GO" id="GO:0008360">
    <property type="term" value="P:regulation of cell shape"/>
    <property type="evidence" value="ECO:0007669"/>
    <property type="project" value="UniProtKB-KW"/>
</dbReference>
<dbReference type="Gene3D" id="3.30.465.10">
    <property type="match status" value="1"/>
</dbReference>
<dbReference type="Gene3D" id="3.90.78.10">
    <property type="entry name" value="UDP-N-acetylenolpyruvoylglucosamine reductase, C-terminal domain"/>
    <property type="match status" value="1"/>
</dbReference>
<dbReference type="Gene3D" id="3.30.43.10">
    <property type="entry name" value="Uridine Diphospho-n-acetylenolpyruvylglucosamine Reductase, domain 2"/>
    <property type="match status" value="1"/>
</dbReference>
<dbReference type="HAMAP" id="MF_00037">
    <property type="entry name" value="MurB"/>
    <property type="match status" value="1"/>
</dbReference>
<dbReference type="InterPro" id="IPR016166">
    <property type="entry name" value="FAD-bd_PCMH"/>
</dbReference>
<dbReference type="InterPro" id="IPR036318">
    <property type="entry name" value="FAD-bd_PCMH-like_sf"/>
</dbReference>
<dbReference type="InterPro" id="IPR016167">
    <property type="entry name" value="FAD-bd_PCMH_sub1"/>
</dbReference>
<dbReference type="InterPro" id="IPR016169">
    <property type="entry name" value="FAD-bd_PCMH_sub2"/>
</dbReference>
<dbReference type="InterPro" id="IPR003170">
    <property type="entry name" value="MurB"/>
</dbReference>
<dbReference type="InterPro" id="IPR011601">
    <property type="entry name" value="MurB_C"/>
</dbReference>
<dbReference type="InterPro" id="IPR036635">
    <property type="entry name" value="MurB_C_sf"/>
</dbReference>
<dbReference type="InterPro" id="IPR006094">
    <property type="entry name" value="Oxid_FAD_bind_N"/>
</dbReference>
<dbReference type="NCBIfam" id="TIGR00179">
    <property type="entry name" value="murB"/>
    <property type="match status" value="1"/>
</dbReference>
<dbReference type="NCBIfam" id="NF010478">
    <property type="entry name" value="PRK13903.1"/>
    <property type="match status" value="1"/>
</dbReference>
<dbReference type="PANTHER" id="PTHR21071">
    <property type="entry name" value="UDP-N-ACETYLENOLPYRUVOYLGLUCOSAMINE REDUCTASE"/>
    <property type="match status" value="1"/>
</dbReference>
<dbReference type="PANTHER" id="PTHR21071:SF4">
    <property type="entry name" value="UDP-N-ACETYLENOLPYRUVOYLGLUCOSAMINE REDUCTASE"/>
    <property type="match status" value="1"/>
</dbReference>
<dbReference type="Pfam" id="PF01565">
    <property type="entry name" value="FAD_binding_4"/>
    <property type="match status" value="1"/>
</dbReference>
<dbReference type="Pfam" id="PF02873">
    <property type="entry name" value="MurB_C"/>
    <property type="match status" value="1"/>
</dbReference>
<dbReference type="SUPFAM" id="SSF56176">
    <property type="entry name" value="FAD-binding/transporter-associated domain-like"/>
    <property type="match status" value="1"/>
</dbReference>
<dbReference type="SUPFAM" id="SSF56194">
    <property type="entry name" value="Uridine diphospho-N-Acetylenolpyruvylglucosamine reductase, MurB, C-terminal domain"/>
    <property type="match status" value="1"/>
</dbReference>
<dbReference type="PROSITE" id="PS51387">
    <property type="entry name" value="FAD_PCMH"/>
    <property type="match status" value="1"/>
</dbReference>
<protein>
    <recommendedName>
        <fullName evidence="1">UDP-N-acetylenolpyruvoylglucosamine reductase</fullName>
        <ecNumber evidence="1">1.3.1.98</ecNumber>
    </recommendedName>
    <alternativeName>
        <fullName evidence="1">UDP-N-acetylmuramate dehydrogenase</fullName>
    </alternativeName>
</protein>
<reference key="1">
    <citation type="submission" date="2007-04" db="EMBL/GenBank/DDBJ databases">
        <title>Complete sequence of chromosome of Mycobacterium gilvum PYR-GCK.</title>
        <authorList>
            <consortium name="US DOE Joint Genome Institute"/>
            <person name="Copeland A."/>
            <person name="Lucas S."/>
            <person name="Lapidus A."/>
            <person name="Barry K."/>
            <person name="Detter J.C."/>
            <person name="Glavina del Rio T."/>
            <person name="Hammon N."/>
            <person name="Israni S."/>
            <person name="Dalin E."/>
            <person name="Tice H."/>
            <person name="Pitluck S."/>
            <person name="Chain P."/>
            <person name="Malfatti S."/>
            <person name="Shin M."/>
            <person name="Vergez L."/>
            <person name="Schmutz J."/>
            <person name="Larimer F."/>
            <person name="Land M."/>
            <person name="Hauser L."/>
            <person name="Kyrpides N."/>
            <person name="Mikhailova N."/>
            <person name="Miller C."/>
            <person name="Richardson P."/>
        </authorList>
    </citation>
    <scope>NUCLEOTIDE SEQUENCE [LARGE SCALE GENOMIC DNA]</scope>
    <source>
        <strain>PYR-GCK</strain>
    </source>
</reference>
<feature type="chain" id="PRO_0000332473" description="UDP-N-acetylenolpyruvoylglucosamine reductase">
    <location>
        <begin position="1"/>
        <end position="349"/>
    </location>
</feature>
<feature type="domain" description="FAD-binding PCMH-type" evidence="1">
    <location>
        <begin position="25"/>
        <end position="213"/>
    </location>
</feature>
<feature type="active site" evidence="1">
    <location>
        <position position="165"/>
    </location>
</feature>
<feature type="active site" description="Proton donor" evidence="1">
    <location>
        <position position="242"/>
    </location>
</feature>
<feature type="active site" evidence="1">
    <location>
        <position position="341"/>
    </location>
</feature>
<accession>A4T318</accession>
<sequence length="349" mass="36218">MGTSLLGGVPVAENVPLAPLTTLRVGPVARRLVTCVTTDQIVDAVMAAGPEALILAGGSNVVLAGDAADLTVVRLANTRISVDGDVVRAEAGAGWDDVVAASLAHGLGGLECLSGIPGSAGATPVQNVGAYGAEVADTIRRVRLLERGTGSVRWVSPEFLRFGYRTSVLKHSSQWVVLEVEFGLDAAGHSAPVRYRELATELAVEQGERTDPQRVRAAVLELRARKGMVLDAADHDTWSVGSFFTNPVVSRAEFERIAATVGSAVPNYPAEDGVKLAAGWLVEQAGFGKGYPGADAPARLSTKHALALTNRGTATTADVLALARTVRDGVKAAFGIELTPEPVLVGCSL</sequence>
<keyword id="KW-0131">Cell cycle</keyword>
<keyword id="KW-0132">Cell division</keyword>
<keyword id="KW-0133">Cell shape</keyword>
<keyword id="KW-0961">Cell wall biogenesis/degradation</keyword>
<keyword id="KW-0963">Cytoplasm</keyword>
<keyword id="KW-0274">FAD</keyword>
<keyword id="KW-0285">Flavoprotein</keyword>
<keyword id="KW-0521">NADP</keyword>
<keyword id="KW-0560">Oxidoreductase</keyword>
<keyword id="KW-0573">Peptidoglycan synthesis</keyword>
<organism>
    <name type="scientific">Mycolicibacterium gilvum (strain PYR-GCK)</name>
    <name type="common">Mycobacterium gilvum (strain PYR-GCK)</name>
    <dbReference type="NCBI Taxonomy" id="350054"/>
    <lineage>
        <taxon>Bacteria</taxon>
        <taxon>Bacillati</taxon>
        <taxon>Actinomycetota</taxon>
        <taxon>Actinomycetes</taxon>
        <taxon>Mycobacteriales</taxon>
        <taxon>Mycobacteriaceae</taxon>
        <taxon>Mycolicibacterium</taxon>
    </lineage>
</organism>
<evidence type="ECO:0000255" key="1">
    <source>
        <dbReference type="HAMAP-Rule" id="MF_00037"/>
    </source>
</evidence>